<evidence type="ECO:0000255" key="1">
    <source>
        <dbReference type="HAMAP-Rule" id="MF_00049"/>
    </source>
</evidence>
<evidence type="ECO:0000305" key="2"/>
<reference key="1">
    <citation type="submission" date="2006-03" db="EMBL/GenBank/DDBJ databases">
        <title>Complete sequence of Shewanella denitrificans OS217.</title>
        <authorList>
            <consortium name="US DOE Joint Genome Institute"/>
            <person name="Copeland A."/>
            <person name="Lucas S."/>
            <person name="Lapidus A."/>
            <person name="Barry K."/>
            <person name="Detter J.C."/>
            <person name="Glavina del Rio T."/>
            <person name="Hammon N."/>
            <person name="Israni S."/>
            <person name="Dalin E."/>
            <person name="Tice H."/>
            <person name="Pitluck S."/>
            <person name="Brettin T."/>
            <person name="Bruce D."/>
            <person name="Han C."/>
            <person name="Tapia R."/>
            <person name="Gilna P."/>
            <person name="Kiss H."/>
            <person name="Schmutz J."/>
            <person name="Larimer F."/>
            <person name="Land M."/>
            <person name="Hauser L."/>
            <person name="Kyrpides N."/>
            <person name="Lykidis A."/>
            <person name="Richardson P."/>
        </authorList>
    </citation>
    <scope>NUCLEOTIDE SEQUENCE [LARGE SCALE GENOMIC DNA]</scope>
    <source>
        <strain>OS217 / ATCC BAA-1090 / DSM 15013</strain>
    </source>
</reference>
<name>SYL_SHEDO</name>
<accession>Q12R39</accession>
<feature type="chain" id="PRO_0000334816" description="Leucine--tRNA ligase">
    <location>
        <begin position="1"/>
        <end position="863"/>
    </location>
</feature>
<feature type="short sequence motif" description="'HIGH' region">
    <location>
        <begin position="42"/>
        <end position="52"/>
    </location>
</feature>
<feature type="short sequence motif" description="'KMSKS' region">
    <location>
        <begin position="622"/>
        <end position="626"/>
    </location>
</feature>
<feature type="binding site" evidence="1">
    <location>
        <position position="625"/>
    </location>
    <ligand>
        <name>ATP</name>
        <dbReference type="ChEBI" id="CHEBI:30616"/>
    </ligand>
</feature>
<sequence>MQELYNPSEIEALVQKHWQEHKTFEVTEDESKEKFYCLSMFPYPSGRLHMGHVRNYTIGDVVARYQRLQGKNVLQPIGWDSFGLPAENAAINNKTSPAPWTYENIDYMKNQLKLLGFGYDWSREIATCTPEYYRWEQWFFTKLYEKGMVYKKTSSVNWCPNDETVLANEQVQDGCCWRCDTPVIQKEIPQWFIKITDYAEELLNDIDTLDGWPEQVKAMQRNWIGRSEGIEMTFKVKDSEQSFDIYTTRPDTLMGVTYVAIAAGHPLAEQAASTNPALAAFIEECKNADTTEAAMASMEKKGVATGLEAVHPISGKLVPIWVANFVLMNYGTGAVMSVPAHDQRDYEFAKAYGLEMQAVIKPADSEVDISKEAYTEKGVLFNSGTAFPELDGLEFQAAFDAIDARLTAEGKGKRQVNYRLRDWGVSRQRYWGAPIPMVTLADGTVMPTPEDQLPVILPEDVVMDGIQSPIKADKAWAETTVDGKPAFRETDTFDTFMESSWYYARYCSPHADEMLDPAKANYWLPVDQYIGGIEHACMHLLYFRFFHKLLRDAGLVNSNEPAKRLLTQGMVLADAYYYTNDKGARVWVSPLEAEVVEKDDKGRVVKAVDSQGNELVYTGMSKMSKSKNNGIDPQTMVEKYGADTVRLFMMFASPPELTLEWQESGVEGAHRFIKRLWKLASDHVAAGPTEALDVSKLSSSQKALRRELHKTIAKVSDDIGRRQMFNTAVAAVMELMNHLSKAPQDSAQDRALLAEALSAVTRLLYPIIPHMSFTLWHELGNSNNIEDSRWPDVDEAALVEDSKLIVVQVNGKVRAKITVAADATKEAVEQLGLDDEHVQKHLEGLTVRKVIYVPGKLLSLVAN</sequence>
<dbReference type="EC" id="6.1.1.4" evidence="1"/>
<dbReference type="EMBL" id="CP000302">
    <property type="protein sequence ID" value="ABE54087.1"/>
    <property type="status" value="ALT_INIT"/>
    <property type="molecule type" value="Genomic_DNA"/>
</dbReference>
<dbReference type="RefSeq" id="WP_041406041.1">
    <property type="nucleotide sequence ID" value="NC_007954.1"/>
</dbReference>
<dbReference type="SMR" id="Q12R39"/>
<dbReference type="STRING" id="318161.Sden_0797"/>
<dbReference type="KEGG" id="sdn:Sden_0797"/>
<dbReference type="eggNOG" id="COG0495">
    <property type="taxonomic scope" value="Bacteria"/>
</dbReference>
<dbReference type="HOGENOM" id="CLU_004427_0_0_6"/>
<dbReference type="OrthoDB" id="9810365at2"/>
<dbReference type="Proteomes" id="UP000001982">
    <property type="component" value="Chromosome"/>
</dbReference>
<dbReference type="GO" id="GO:0005829">
    <property type="term" value="C:cytosol"/>
    <property type="evidence" value="ECO:0007669"/>
    <property type="project" value="TreeGrafter"/>
</dbReference>
<dbReference type="GO" id="GO:0002161">
    <property type="term" value="F:aminoacyl-tRNA deacylase activity"/>
    <property type="evidence" value="ECO:0007669"/>
    <property type="project" value="InterPro"/>
</dbReference>
<dbReference type="GO" id="GO:0005524">
    <property type="term" value="F:ATP binding"/>
    <property type="evidence" value="ECO:0007669"/>
    <property type="project" value="UniProtKB-UniRule"/>
</dbReference>
<dbReference type="GO" id="GO:0004823">
    <property type="term" value="F:leucine-tRNA ligase activity"/>
    <property type="evidence" value="ECO:0007669"/>
    <property type="project" value="UniProtKB-UniRule"/>
</dbReference>
<dbReference type="GO" id="GO:0006429">
    <property type="term" value="P:leucyl-tRNA aminoacylation"/>
    <property type="evidence" value="ECO:0007669"/>
    <property type="project" value="UniProtKB-UniRule"/>
</dbReference>
<dbReference type="CDD" id="cd07958">
    <property type="entry name" value="Anticodon_Ia_Leu_BEm"/>
    <property type="match status" value="1"/>
</dbReference>
<dbReference type="CDD" id="cd00812">
    <property type="entry name" value="LeuRS_core"/>
    <property type="match status" value="1"/>
</dbReference>
<dbReference type="FunFam" id="1.10.730.10:FF:000003">
    <property type="entry name" value="Leucine--tRNA ligase"/>
    <property type="match status" value="1"/>
</dbReference>
<dbReference type="FunFam" id="2.20.28.290:FF:000001">
    <property type="entry name" value="Leucine--tRNA ligase"/>
    <property type="match status" value="1"/>
</dbReference>
<dbReference type="FunFam" id="3.10.20.590:FF:000001">
    <property type="entry name" value="Leucine--tRNA ligase"/>
    <property type="match status" value="1"/>
</dbReference>
<dbReference type="FunFam" id="3.40.50.620:FF:000003">
    <property type="entry name" value="Leucine--tRNA ligase"/>
    <property type="match status" value="1"/>
</dbReference>
<dbReference type="FunFam" id="3.40.50.620:FF:000124">
    <property type="entry name" value="Leucine--tRNA ligase"/>
    <property type="match status" value="1"/>
</dbReference>
<dbReference type="FunFam" id="3.90.740.10:FF:000012">
    <property type="entry name" value="Leucine--tRNA ligase"/>
    <property type="match status" value="1"/>
</dbReference>
<dbReference type="Gene3D" id="2.20.28.290">
    <property type="match status" value="1"/>
</dbReference>
<dbReference type="Gene3D" id="3.10.20.590">
    <property type="match status" value="1"/>
</dbReference>
<dbReference type="Gene3D" id="3.40.50.620">
    <property type="entry name" value="HUPs"/>
    <property type="match status" value="2"/>
</dbReference>
<dbReference type="Gene3D" id="1.10.730.10">
    <property type="entry name" value="Isoleucyl-tRNA Synthetase, Domain 1"/>
    <property type="match status" value="2"/>
</dbReference>
<dbReference type="HAMAP" id="MF_00049_B">
    <property type="entry name" value="Leu_tRNA_synth_B"/>
    <property type="match status" value="1"/>
</dbReference>
<dbReference type="InterPro" id="IPR001412">
    <property type="entry name" value="aa-tRNA-synth_I_CS"/>
</dbReference>
<dbReference type="InterPro" id="IPR002300">
    <property type="entry name" value="aa-tRNA-synth_Ia"/>
</dbReference>
<dbReference type="InterPro" id="IPR002302">
    <property type="entry name" value="Leu-tRNA-ligase"/>
</dbReference>
<dbReference type="InterPro" id="IPR025709">
    <property type="entry name" value="Leu_tRNA-synth_edit"/>
</dbReference>
<dbReference type="InterPro" id="IPR013155">
    <property type="entry name" value="M/V/L/I-tRNA-synth_anticd-bd"/>
</dbReference>
<dbReference type="InterPro" id="IPR015413">
    <property type="entry name" value="Methionyl/Leucyl_tRNA_Synth"/>
</dbReference>
<dbReference type="InterPro" id="IPR014729">
    <property type="entry name" value="Rossmann-like_a/b/a_fold"/>
</dbReference>
<dbReference type="InterPro" id="IPR009080">
    <property type="entry name" value="tRNAsynth_Ia_anticodon-bd"/>
</dbReference>
<dbReference type="InterPro" id="IPR009008">
    <property type="entry name" value="Val/Leu/Ile-tRNA-synth_edit"/>
</dbReference>
<dbReference type="NCBIfam" id="TIGR00396">
    <property type="entry name" value="leuS_bact"/>
    <property type="match status" value="1"/>
</dbReference>
<dbReference type="PANTHER" id="PTHR43740:SF2">
    <property type="entry name" value="LEUCINE--TRNA LIGASE, MITOCHONDRIAL"/>
    <property type="match status" value="1"/>
</dbReference>
<dbReference type="PANTHER" id="PTHR43740">
    <property type="entry name" value="LEUCYL-TRNA SYNTHETASE"/>
    <property type="match status" value="1"/>
</dbReference>
<dbReference type="Pfam" id="PF08264">
    <property type="entry name" value="Anticodon_1"/>
    <property type="match status" value="1"/>
</dbReference>
<dbReference type="Pfam" id="PF00133">
    <property type="entry name" value="tRNA-synt_1"/>
    <property type="match status" value="2"/>
</dbReference>
<dbReference type="Pfam" id="PF13603">
    <property type="entry name" value="tRNA-synt_1_2"/>
    <property type="match status" value="1"/>
</dbReference>
<dbReference type="Pfam" id="PF09334">
    <property type="entry name" value="tRNA-synt_1g"/>
    <property type="match status" value="1"/>
</dbReference>
<dbReference type="PRINTS" id="PR00985">
    <property type="entry name" value="TRNASYNTHLEU"/>
</dbReference>
<dbReference type="SUPFAM" id="SSF47323">
    <property type="entry name" value="Anticodon-binding domain of a subclass of class I aminoacyl-tRNA synthetases"/>
    <property type="match status" value="1"/>
</dbReference>
<dbReference type="SUPFAM" id="SSF52374">
    <property type="entry name" value="Nucleotidylyl transferase"/>
    <property type="match status" value="1"/>
</dbReference>
<dbReference type="SUPFAM" id="SSF50677">
    <property type="entry name" value="ValRS/IleRS/LeuRS editing domain"/>
    <property type="match status" value="1"/>
</dbReference>
<dbReference type="PROSITE" id="PS00178">
    <property type="entry name" value="AA_TRNA_LIGASE_I"/>
    <property type="match status" value="1"/>
</dbReference>
<comment type="catalytic activity">
    <reaction evidence="1">
        <text>tRNA(Leu) + L-leucine + ATP = L-leucyl-tRNA(Leu) + AMP + diphosphate</text>
        <dbReference type="Rhea" id="RHEA:11688"/>
        <dbReference type="Rhea" id="RHEA-COMP:9613"/>
        <dbReference type="Rhea" id="RHEA-COMP:9622"/>
        <dbReference type="ChEBI" id="CHEBI:30616"/>
        <dbReference type="ChEBI" id="CHEBI:33019"/>
        <dbReference type="ChEBI" id="CHEBI:57427"/>
        <dbReference type="ChEBI" id="CHEBI:78442"/>
        <dbReference type="ChEBI" id="CHEBI:78494"/>
        <dbReference type="ChEBI" id="CHEBI:456215"/>
        <dbReference type="EC" id="6.1.1.4"/>
    </reaction>
</comment>
<comment type="subcellular location">
    <subcellularLocation>
        <location evidence="1">Cytoplasm</location>
    </subcellularLocation>
</comment>
<comment type="similarity">
    <text evidence="1">Belongs to the class-I aminoacyl-tRNA synthetase family.</text>
</comment>
<comment type="sequence caution" evidence="2">
    <conflict type="erroneous initiation">
        <sequence resource="EMBL-CDS" id="ABE54087"/>
    </conflict>
</comment>
<proteinExistence type="inferred from homology"/>
<protein>
    <recommendedName>
        <fullName evidence="1">Leucine--tRNA ligase</fullName>
        <ecNumber evidence="1">6.1.1.4</ecNumber>
    </recommendedName>
    <alternativeName>
        <fullName evidence="1">Leucyl-tRNA synthetase</fullName>
        <shortName evidence="1">LeuRS</shortName>
    </alternativeName>
</protein>
<keyword id="KW-0030">Aminoacyl-tRNA synthetase</keyword>
<keyword id="KW-0067">ATP-binding</keyword>
<keyword id="KW-0963">Cytoplasm</keyword>
<keyword id="KW-0436">Ligase</keyword>
<keyword id="KW-0547">Nucleotide-binding</keyword>
<keyword id="KW-0648">Protein biosynthesis</keyword>
<keyword id="KW-1185">Reference proteome</keyword>
<gene>
    <name evidence="1" type="primary">leuS</name>
    <name type="ordered locus">Sden_0797</name>
</gene>
<organism>
    <name type="scientific">Shewanella denitrificans (strain OS217 / ATCC BAA-1090 / DSM 15013)</name>
    <dbReference type="NCBI Taxonomy" id="318161"/>
    <lineage>
        <taxon>Bacteria</taxon>
        <taxon>Pseudomonadati</taxon>
        <taxon>Pseudomonadota</taxon>
        <taxon>Gammaproteobacteria</taxon>
        <taxon>Alteromonadales</taxon>
        <taxon>Shewanellaceae</taxon>
        <taxon>Shewanella</taxon>
    </lineage>
</organism>